<dbReference type="EMBL" id="EF157976">
    <property type="protein sequence ID" value="ABO65245.1"/>
    <property type="molecule type" value="Genomic_RNA"/>
</dbReference>
<dbReference type="RefSeq" id="YP_001285390.1">
    <property type="nucleotide sequence ID" value="NC_009527.1"/>
</dbReference>
<dbReference type="SMR" id="A4UHQ0"/>
<dbReference type="GeneID" id="5219907"/>
<dbReference type="KEGG" id="vg:5219907"/>
<dbReference type="Proteomes" id="UP000008926">
    <property type="component" value="Segment"/>
</dbReference>
<dbReference type="GO" id="GO:0033645">
    <property type="term" value="C:host cell endomembrane system"/>
    <property type="evidence" value="ECO:0007669"/>
    <property type="project" value="UniProtKB-SubCell"/>
</dbReference>
<dbReference type="GO" id="GO:0016020">
    <property type="term" value="C:membrane"/>
    <property type="evidence" value="ECO:0007669"/>
    <property type="project" value="UniProtKB-KW"/>
</dbReference>
<dbReference type="GO" id="GO:0019031">
    <property type="term" value="C:viral envelope"/>
    <property type="evidence" value="ECO:0007669"/>
    <property type="project" value="UniProtKB-KW"/>
</dbReference>
<dbReference type="GO" id="GO:0055036">
    <property type="term" value="C:virion membrane"/>
    <property type="evidence" value="ECO:0007669"/>
    <property type="project" value="UniProtKB-SubCell"/>
</dbReference>
<dbReference type="GO" id="GO:0039660">
    <property type="term" value="F:structural constituent of virion"/>
    <property type="evidence" value="ECO:0007669"/>
    <property type="project" value="UniProtKB-KW"/>
</dbReference>
<dbReference type="GO" id="GO:0039702">
    <property type="term" value="P:viral budding via host ESCRT complex"/>
    <property type="evidence" value="ECO:0007669"/>
    <property type="project" value="UniProtKB-KW"/>
</dbReference>
<dbReference type="Gene3D" id="3.10.460.20">
    <property type="entry name" value="Rhabdovirus matrix protein M2"/>
    <property type="match status" value="1"/>
</dbReference>
<dbReference type="InterPro" id="IPR006870">
    <property type="entry name" value="Rhabdo_M"/>
</dbReference>
<dbReference type="InterPro" id="IPR038617">
    <property type="entry name" value="Rhabdovirus_M_sf"/>
</dbReference>
<dbReference type="Pfam" id="PF04785">
    <property type="entry name" value="Rhabdo_M2"/>
    <property type="match status" value="1"/>
</dbReference>
<reference key="1">
    <citation type="journal article" date="2007" name="J. Gen. Virol.">
        <title>Comparative analysis of the full genome sequence of European bat lyssavirus type 1 and type 2 with other lyssaviruses and evidence for a conserved transcription termination and polyadenylation motif in the G-L 3' non-translated region.</title>
        <authorList>
            <person name="Marston D.A."/>
            <person name="McElhinney L.M."/>
            <person name="Johnson N."/>
            <person name="Muller T."/>
            <person name="Conzelmann K.K."/>
            <person name="Tordo N."/>
            <person name="Fooks A.R."/>
        </authorList>
    </citation>
    <scope>NUCLEOTIDE SEQUENCE [GENOMIC RNA]</scope>
</reference>
<gene>
    <name type="primary">M</name>
</gene>
<sequence>MKIIRKIVKSCKDDEMQKPNPVSAPPDDDDLWLPPPEYVPLSEMTGKKNMRNFCINGEVKVCSPNGYSFRIIRHILSSFEGVYSGNRRMIGLVKVVIGLALSGAPVPDGMNWVYKIRRTLIFQWAESSGPLDGEELEYSQEITWDDDSEFVGLQMRVSARQCHIQGRLWCINMNSRACQLWSDMSLKTQQSDEDKNTSLLLE</sequence>
<proteinExistence type="inferred from homology"/>
<comment type="function">
    <text evidence="1">Plays a major role in assembly and budding of virion. Completely covers the ribonucleoprotein coil and keep it in condensed bullet-shaped form. Inhibits viral transcription and stimulates replication. Plays a major role in early induction of TRAIL-mediated apoptosis in infected neurons (By similarity).</text>
</comment>
<comment type="subunit">
    <text evidence="1">Homomultimer. Interacts with nucleoprotein and with the cytoplasmic domain of glycoprotein (By similarity).</text>
</comment>
<comment type="subcellular location">
    <subcellularLocation>
        <location>Virion membrane</location>
        <topology>Peripheral membrane protein</topology>
    </subcellularLocation>
    <subcellularLocation>
        <location evidence="1">Host endomembrane system</location>
        <topology evidence="1">Peripheral membrane protein</topology>
    </subcellularLocation>
</comment>
<comment type="domain">
    <text evidence="3">Late-budding domains (L domains) are short sequence motifs essential for viral particle budding. They recruit proteins of the host ESCRT machinery (Endosomal Sorting Complex Required for Transport) or ESCRT-associated proteins. Matrix protein contains one L domain: a PPXY motif which potentially interacts with the WW domain 3 of NEDD4 E3 ubiquitin ligase (Potential).</text>
</comment>
<comment type="miscellaneous">
    <text evidence="1">Most abundant protein in the virion.</text>
</comment>
<comment type="similarity">
    <text evidence="3">Belongs to the lyssavirus matrix protein family.</text>
</comment>
<protein>
    <recommendedName>
        <fullName>Matrix protein</fullName>
    </recommendedName>
</protein>
<keyword id="KW-0053">Apoptosis</keyword>
<keyword id="KW-1043">Host membrane</keyword>
<keyword id="KW-0945">Host-virus interaction</keyword>
<keyword id="KW-0472">Membrane</keyword>
<keyword id="KW-1185">Reference proteome</keyword>
<keyword id="KW-1198">Viral budding</keyword>
<keyword id="KW-1187">Viral budding via the host ESCRT complexes</keyword>
<keyword id="KW-0261">Viral envelope protein</keyword>
<keyword id="KW-0468">Viral matrix protein</keyword>
<keyword id="KW-1188">Viral release from host cell</keyword>
<keyword id="KW-0946">Virion</keyword>
<name>MATRX_EBLV1</name>
<accession>A4UHQ0</accession>
<feature type="chain" id="PRO_0000299102" description="Matrix protein">
    <location>
        <begin position="1"/>
        <end position="202"/>
    </location>
</feature>
<feature type="short sequence motif" description="PPXY motif" evidence="2">
    <location>
        <begin position="35"/>
        <end position="38"/>
    </location>
</feature>
<organism>
    <name type="scientific">European bat lyssavirus 1 (strain Bat/Germany/RV9/1968)</name>
    <name type="common">EBLV1</name>
    <dbReference type="NCBI Taxonomy" id="453115"/>
    <lineage>
        <taxon>Viruses</taxon>
        <taxon>Riboviria</taxon>
        <taxon>Orthornavirae</taxon>
        <taxon>Negarnaviricota</taxon>
        <taxon>Haploviricotina</taxon>
        <taxon>Monjiviricetes</taxon>
        <taxon>Mononegavirales</taxon>
        <taxon>Rhabdoviridae</taxon>
        <taxon>Alpharhabdovirinae</taxon>
        <taxon>Lyssavirus</taxon>
        <taxon>Lyssavirus hamburg</taxon>
    </lineage>
</organism>
<organismHost>
    <name type="scientific">Mammalia</name>
    <dbReference type="NCBI Taxonomy" id="40674"/>
</organismHost>
<evidence type="ECO:0000250" key="1"/>
<evidence type="ECO:0000255" key="2"/>
<evidence type="ECO:0000305" key="3"/>